<sequence>MEGDGGTPWALALLRTFDAGEFTGWEKVGSGGFGQVYKVRHVHWKTWLAIKCSPSLHVDDRERMELLEEAKKMEMAKFRYILPVYGICREPVGLVMEYMETGSLEKLLASEPLPWDLRFRIIHETAVGMNFLHCMAPPLLHLDLKPANILLDAHYHVKISDFGLAKCNGLSHSHDLSMDGLFGTIAYLPPERIREKSRLFDTKHDVYSFAIVIWGVLTQKKPFADEKNILHIMVKVVKGHRPELPPVCRARPRACSHLIRLMQRCWQGDPRVRPTFQGNGLNGELIRQVLAALLPVTGRWRSPGEGFRLESEVIIRVTCPLSSPQEITSETEDLCEKPDDEVKETAHDLDVKSPPEPRSEVVPARLKRASAPTFDNDYSLSELLSQLDSGVSQAVEGPEELSRSSSESKLPSSGSGKRLSGVSSVDSAFSSRGSLSLSFEREPSTSDLGTTDVQKKKLVDAIVSGDTSKLMKILQPQDVDLALDSGASLLHLAVEAGQEECAKWLLLNNANPNLSNRRGSTPLHMAVERRVRGVVELLLARKISVNAKDEDQWTALHFAAQNGDESSTRLLLEKNASVNEVDFEGRTPMHVACQHGQENIVRILLRRGVDVSLQGKDAWLPLHYAAWQGHLPIVKLLAKQPGVSVNAQTLDGRTPLHLAAQRGHYRVARILIDLCSDVNVCSLLAQTPLHVAAETGHTSTARLLLHRGAGKEAMTSDGYTALHLAARNGHLATVKLLVEEKADVLARGPLNQTALHLAAAHGHSEVVEELVSADVIDLFDEQGLSALHLAAQGRHAQTVETLLRHGAHINLQSLKFQGGHGPAATLLRRSKT</sequence>
<reference key="1">
    <citation type="submission" date="2000-08" db="EMBL/GenBank/DDBJ databases">
        <authorList>
            <person name="Shimizu N."/>
            <person name="Kudoh J."/>
            <person name="Shibuya K."/>
        </authorList>
    </citation>
    <scope>NUCLEOTIDE SEQUENCE [MRNA] (ISOFORM 2)</scope>
    <source>
        <tissue>Fetal kidney</tissue>
        <tissue>Fetal lung</tissue>
    </source>
</reference>
<reference key="2">
    <citation type="journal article" date="2000" name="Nature">
        <title>The DNA sequence of human chromosome 21.</title>
        <authorList>
            <person name="Hattori M."/>
            <person name="Fujiyama A."/>
            <person name="Taylor T.D."/>
            <person name="Watanabe H."/>
            <person name="Yada T."/>
            <person name="Park H.-S."/>
            <person name="Toyoda A."/>
            <person name="Ishii K."/>
            <person name="Totoki Y."/>
            <person name="Choi D.-K."/>
            <person name="Groner Y."/>
            <person name="Soeda E."/>
            <person name="Ohki M."/>
            <person name="Takagi T."/>
            <person name="Sakaki Y."/>
            <person name="Taudien S."/>
            <person name="Blechschmidt K."/>
            <person name="Polley A."/>
            <person name="Menzel U."/>
            <person name="Delabar J."/>
            <person name="Kumpf K."/>
            <person name="Lehmann R."/>
            <person name="Patterson D."/>
            <person name="Reichwald K."/>
            <person name="Rump A."/>
            <person name="Schillhabel M."/>
            <person name="Schudy A."/>
            <person name="Zimmermann W."/>
            <person name="Rosenthal A."/>
            <person name="Kudoh J."/>
            <person name="Shibuya K."/>
            <person name="Kawasaki K."/>
            <person name="Asakawa S."/>
            <person name="Shintani A."/>
            <person name="Sasaki T."/>
            <person name="Nagamine K."/>
            <person name="Mitsuyama S."/>
            <person name="Antonarakis S.E."/>
            <person name="Minoshima S."/>
            <person name="Shimizu N."/>
            <person name="Nordsiek G."/>
            <person name="Hornischer K."/>
            <person name="Brandt P."/>
            <person name="Scharfe M."/>
            <person name="Schoen O."/>
            <person name="Desario A."/>
            <person name="Reichelt J."/>
            <person name="Kauer G."/>
            <person name="Bloecker H."/>
            <person name="Ramser J."/>
            <person name="Beck A."/>
            <person name="Klages S."/>
            <person name="Hennig S."/>
            <person name="Riesselmann L."/>
            <person name="Dagand E."/>
            <person name="Wehrmeyer S."/>
            <person name="Borzym K."/>
            <person name="Gardiner K."/>
            <person name="Nizetic D."/>
            <person name="Francis F."/>
            <person name="Lehrach H."/>
            <person name="Reinhardt R."/>
            <person name="Yaspo M.-L."/>
        </authorList>
    </citation>
    <scope>NUCLEOTIDE SEQUENCE [LARGE SCALE GENOMIC DNA]</scope>
</reference>
<reference key="3">
    <citation type="journal article" date="2002" name="EMBO Rep.">
        <title>RIP4 (DIK/PKK), a novel member of the RIP kinase family, activates NF-kappa B and is processed during apoptosis.</title>
        <authorList>
            <person name="Meylan E."/>
            <person name="Martinon F."/>
            <person name="Thome M."/>
            <person name="Gschwendt M."/>
            <person name="Tschopp J."/>
        </authorList>
    </citation>
    <scope>FUNCTION</scope>
    <scope>INTERACTION WITH TRAF1; TRAF2; TRAF3 AND TRAF5</scope>
    <scope>PROTEOLYTIC CLEAVAGE AT ASP-388 AND ASP-426</scope>
</reference>
<reference key="4">
    <citation type="journal article" date="2011" name="PLoS ONE">
        <title>cIAP1/2 are direct E3 ligases conjugating diverse types of ubiquitin chains to receptor interacting proteins kinases 1 to 4 (RIP1-4).</title>
        <authorList>
            <person name="Bertrand M.J."/>
            <person name="Lippens S."/>
            <person name="Staes A."/>
            <person name="Gilbert B."/>
            <person name="Roelandt R."/>
            <person name="De Medts J."/>
            <person name="Gevaert K."/>
            <person name="Declercq W."/>
            <person name="Vandenabeele P."/>
        </authorList>
    </citation>
    <scope>UBIQUITINATION AT LYS-51 AND LYS-145</scope>
    <scope>UBIQUITINATION BY BIRC2/C-IAP1 AND BIRC3/C-IAP2</scope>
    <scope>INTERACTION WITH BIRC2/C-IAP1; BIRC3/C-IAP2 AND XIAP/BIRC4</scope>
</reference>
<reference key="5">
    <citation type="journal article" date="2012" name="Am. J. Hum. Genet.">
        <title>Exome sequence identifies RIPK4 as the Bartsocas-Papas syndrome locus.</title>
        <authorList>
            <person name="Mitchell K."/>
            <person name="O'Sullivan J."/>
            <person name="Missero C."/>
            <person name="Blair E."/>
            <person name="Richardson R."/>
            <person name="Anderson B."/>
            <person name="Antonini D."/>
            <person name="Murray J.C."/>
            <person name="Shanske A.L."/>
            <person name="Schutte B.C."/>
            <person name="Romano R.A."/>
            <person name="Sinha S."/>
            <person name="Bhaskar S.S."/>
            <person name="Black G.C."/>
            <person name="Dixon J."/>
            <person name="Dixon M.J."/>
        </authorList>
    </citation>
    <scope>FUNCTION</scope>
    <scope>VARIANT BPS ASN-81</scope>
</reference>
<reference key="6">
    <citation type="journal article" date="2007" name="Nature">
        <title>Patterns of somatic mutation in human cancer genomes.</title>
        <authorList>
            <person name="Greenman C."/>
            <person name="Stephens P."/>
            <person name="Smith R."/>
            <person name="Dalgliesh G.L."/>
            <person name="Hunter C."/>
            <person name="Bignell G."/>
            <person name="Davies H."/>
            <person name="Teague J."/>
            <person name="Butler A."/>
            <person name="Stevens C."/>
            <person name="Edkins S."/>
            <person name="O'Meara S."/>
            <person name="Vastrik I."/>
            <person name="Schmidt E.E."/>
            <person name="Avis T."/>
            <person name="Barthorpe S."/>
            <person name="Bhamra G."/>
            <person name="Buck G."/>
            <person name="Choudhury B."/>
            <person name="Clements J."/>
            <person name="Cole J."/>
            <person name="Dicks E."/>
            <person name="Forbes S."/>
            <person name="Gray K."/>
            <person name="Halliday K."/>
            <person name="Harrison R."/>
            <person name="Hills K."/>
            <person name="Hinton J."/>
            <person name="Jenkinson A."/>
            <person name="Jones D."/>
            <person name="Menzies A."/>
            <person name="Mironenko T."/>
            <person name="Perry J."/>
            <person name="Raine K."/>
            <person name="Richardson D."/>
            <person name="Shepherd R."/>
            <person name="Small A."/>
            <person name="Tofts C."/>
            <person name="Varian J."/>
            <person name="Webb T."/>
            <person name="West S."/>
            <person name="Widaa S."/>
            <person name="Yates A."/>
            <person name="Cahill D.P."/>
            <person name="Louis D.N."/>
            <person name="Goldstraw P."/>
            <person name="Nicholson A.G."/>
            <person name="Brasseur F."/>
            <person name="Looijenga L."/>
            <person name="Weber B.L."/>
            <person name="Chiew Y.-E."/>
            <person name="DeFazio A."/>
            <person name="Greaves M.F."/>
            <person name="Green A.R."/>
            <person name="Campbell P."/>
            <person name="Birney E."/>
            <person name="Easton D.F."/>
            <person name="Chenevix-Trench G."/>
            <person name="Tan M.-H."/>
            <person name="Khoo S.K."/>
            <person name="Teh B.T."/>
            <person name="Yuen S.T."/>
            <person name="Leung S.Y."/>
            <person name="Wooster R."/>
            <person name="Futreal P.A."/>
            <person name="Stratton M.R."/>
        </authorList>
    </citation>
    <scope>VARIANTS [LARGE SCALE ANALYSIS] ASN-462; MET-463; TYR-562; HIS-669 AND SER-749</scope>
</reference>
<reference key="7">
    <citation type="journal article" date="2012" name="Am. J. Hum. Genet.">
        <title>Mutations in RIPK4 cause the autosomal-recessive form of popliteal pterygium syndrome.</title>
        <authorList>
            <person name="Kalay E."/>
            <person name="Sezgin O."/>
            <person name="Chellappa V."/>
            <person name="Mutlu M."/>
            <person name="Morsy H."/>
            <person name="Kayserili H."/>
            <person name="Kreiger E."/>
            <person name="Cansu A."/>
            <person name="Toraman B."/>
            <person name="Abdalla E.M."/>
            <person name="Aslan Y."/>
            <person name="Pillai S."/>
            <person name="Akarsu N.A."/>
        </authorList>
    </citation>
    <scope>VARIANTS BPS ASN-121 AND ILE-184</scope>
    <scope>CHARACTERIZATION OF VARIANTS BPS ASN-121 AND ILE-184</scope>
</reference>
<reference key="8">
    <citation type="journal article" date="2013" name="Am. J. Med. Genet. A">
        <title>Exome analysis in clinical practice: expanding the phenotype of Bartsocas-Papas syndrome.</title>
        <authorList>
            <person name="Gripp K.W."/>
            <person name="Ennis S."/>
            <person name="Napoli J."/>
        </authorList>
    </citation>
    <scope>INVOLVEMENT IN CHANDS</scope>
    <scope>VARIANT CHANDS ASP-163</scope>
</reference>
<reference key="9">
    <citation type="journal article" date="2015" name="Am. J. Med. Genet. A">
        <title>Identification of a novel mutation in RIPK4 in a kindred with phenotypic features of Bartsocas-Papas and CHAND syndromes.</title>
        <authorList>
            <person name="Gollasch B."/>
            <person name="Basmanav F.B."/>
            <person name="Nanda A."/>
            <person name="Fritz G."/>
            <person name="Mahmoudi H."/>
            <person name="Thiele H."/>
            <person name="Wehner M."/>
            <person name="Wolf S."/>
            <person name="Altmueller J."/>
            <person name="Nuernberg P."/>
            <person name="Frank J."/>
            <person name="Betz R.C."/>
        </authorList>
    </citation>
    <scope>INVOLVEMENT IN CHANDS</scope>
    <scope>VARIANT CHANDS LYS-284</scope>
    <scope>TISSUE SPECIFICITY</scope>
</reference>
<reference key="10">
    <citation type="journal article" date="2015" name="Am. J. Med. Genet. A">
        <title>Expanding the genetic and phenotypic spectrum of popliteal pterygium disorders.</title>
        <authorList>
            <person name="Leslie E.J."/>
            <person name="O'Sullivan J."/>
            <person name="Cunningham M.L."/>
            <person name="Singh A."/>
            <person name="Goudy S.L."/>
            <person name="Ababneh F."/>
            <person name="Alsubaie L."/>
            <person name="Ch'ng G.S."/>
            <person name="van der Laar I.M."/>
            <person name="Hoogeboom A.J."/>
            <person name="Dunnwald M."/>
            <person name="Kapoor S."/>
            <person name="Jiramongkolchai P."/>
            <person name="Standley J."/>
            <person name="Manak J.R."/>
            <person name="Murray J.C."/>
            <person name="Dixon M.J."/>
        </authorList>
    </citation>
    <scope>VARIANTS BPS LEU-189; PRO-496 AND HIS-666</scope>
</reference>
<organism>
    <name type="scientific">Homo sapiens</name>
    <name type="common">Human</name>
    <dbReference type="NCBI Taxonomy" id="9606"/>
    <lineage>
        <taxon>Eukaryota</taxon>
        <taxon>Metazoa</taxon>
        <taxon>Chordata</taxon>
        <taxon>Craniata</taxon>
        <taxon>Vertebrata</taxon>
        <taxon>Euteleostomi</taxon>
        <taxon>Mammalia</taxon>
        <taxon>Eutheria</taxon>
        <taxon>Euarchontoglires</taxon>
        <taxon>Primates</taxon>
        <taxon>Haplorrhini</taxon>
        <taxon>Catarrhini</taxon>
        <taxon>Hominidae</taxon>
        <taxon>Homo</taxon>
    </lineage>
</organism>
<feature type="chain" id="PRO_0000086613" description="Receptor-interacting serine/threonine-protein kinase 4">
    <location>
        <begin position="1"/>
        <end position="832"/>
    </location>
</feature>
<feature type="domain" description="Protein kinase" evidence="3">
    <location>
        <begin position="22"/>
        <end position="286"/>
    </location>
</feature>
<feature type="repeat" description="ANK 1">
    <location>
        <begin position="485"/>
        <end position="514"/>
    </location>
</feature>
<feature type="repeat" description="ANK 2">
    <location>
        <begin position="518"/>
        <end position="547"/>
    </location>
</feature>
<feature type="repeat" description="ANK 3">
    <location>
        <begin position="551"/>
        <end position="580"/>
    </location>
</feature>
<feature type="repeat" description="ANK 4">
    <location>
        <begin position="584"/>
        <end position="613"/>
    </location>
</feature>
<feature type="repeat" description="ANK 5">
    <location>
        <begin position="617"/>
        <end position="647"/>
    </location>
</feature>
<feature type="repeat" description="ANK 6">
    <location>
        <begin position="651"/>
        <end position="680"/>
    </location>
</feature>
<feature type="repeat" description="ANK 7">
    <location>
        <begin position="684"/>
        <end position="713"/>
    </location>
</feature>
<feature type="repeat" description="ANK 8">
    <location>
        <begin position="717"/>
        <end position="746"/>
    </location>
</feature>
<feature type="repeat" description="ANK 9">
    <location>
        <begin position="750"/>
        <end position="780"/>
    </location>
</feature>
<feature type="repeat" description="ANK 10">
    <location>
        <begin position="782"/>
        <end position="811"/>
    </location>
</feature>
<feature type="region of interest" description="Disordered" evidence="5">
    <location>
        <begin position="325"/>
        <end position="368"/>
    </location>
</feature>
<feature type="region of interest" description="Disordered" evidence="5">
    <location>
        <begin position="389"/>
        <end position="424"/>
    </location>
</feature>
<feature type="compositionally biased region" description="Acidic residues" evidence="5">
    <location>
        <begin position="329"/>
        <end position="342"/>
    </location>
</feature>
<feature type="compositionally biased region" description="Basic and acidic residues" evidence="5">
    <location>
        <begin position="343"/>
        <end position="359"/>
    </location>
</feature>
<feature type="compositionally biased region" description="Low complexity" evidence="5">
    <location>
        <begin position="403"/>
        <end position="424"/>
    </location>
</feature>
<feature type="active site" description="Proton acceptor" evidence="3 4">
    <location>
        <position position="143"/>
    </location>
</feature>
<feature type="binding site" evidence="3">
    <location>
        <begin position="28"/>
        <end position="36"/>
    </location>
    <ligand>
        <name>ATP</name>
        <dbReference type="ChEBI" id="CHEBI:30616"/>
    </ligand>
</feature>
<feature type="binding site" evidence="3">
    <location>
        <position position="51"/>
    </location>
    <ligand>
        <name>ATP</name>
        <dbReference type="ChEBI" id="CHEBI:30616"/>
    </ligand>
</feature>
<feature type="site" description="Cleavage" evidence="6">
    <location>
        <begin position="388"/>
        <end position="389"/>
    </location>
</feature>
<feature type="site" description="Cleavage" evidence="6">
    <location>
        <begin position="426"/>
        <end position="427"/>
    </location>
</feature>
<feature type="cross-link" description="Glycyl lysine isopeptide (Lys-Gly) (interchain with G-Cter in ubiquitin)" evidence="8">
    <location>
        <position position="51"/>
    </location>
</feature>
<feature type="cross-link" description="Glycyl lysine isopeptide (Lys-Gly) (interchain with G-Cter in ubiquitin)" evidence="8">
    <location>
        <position position="145"/>
    </location>
</feature>
<feature type="splice variant" id="VSP_004862" description="In isoform 2." evidence="14">
    <location>
        <begin position="278"/>
        <end position="325"/>
    </location>
</feature>
<feature type="sequence variant" id="VAR_030160" description="In dbSNP:rs6586239.">
    <original>A</original>
    <variation>G</variation>
    <location>
        <position position="12"/>
    </location>
</feature>
<feature type="sequence variant" id="VAR_067331" description="In BPS; dbSNP:rs387906922." evidence="9">
    <original>I</original>
    <variation>N</variation>
    <location>
        <position position="81"/>
    </location>
</feature>
<feature type="sequence variant" id="VAR_067332" description="In BPS; loss of function; dbSNP:rs387906923." evidence="10">
    <original>I</original>
    <variation>N</variation>
    <location>
        <position position="121"/>
    </location>
</feature>
<feature type="sequence variant" id="VAR_081473" description="In CHANDS; uncertain significance; dbSNP:rs764278537." evidence="11">
    <original>G</original>
    <variation>D</variation>
    <location>
        <position position="163"/>
    </location>
</feature>
<feature type="sequence variant" id="VAR_030161" description="In dbSNP:rs12482626.">
    <original>S</original>
    <variation>N</variation>
    <location>
        <position position="177"/>
    </location>
</feature>
<feature type="sequence variant" id="VAR_067333" description="In BPS; loss of function." evidence="10">
    <original>T</original>
    <variation>I</variation>
    <location>
        <position position="184"/>
    </location>
</feature>
<feature type="sequence variant" id="VAR_085697" description="In BPS; uncertain significance." evidence="12">
    <original>P</original>
    <variation>L</variation>
    <location>
        <position position="189"/>
    </location>
</feature>
<feature type="sequence variant" id="VAR_081474" description="In CHANDS; uncertain significance." evidence="13">
    <original>E</original>
    <variation>K</variation>
    <location>
        <position position="284"/>
    </location>
</feature>
<feature type="sequence variant" id="VAR_041050" description="In dbSNP:rs55809511." evidence="7">
    <original>I</original>
    <variation>N</variation>
    <location>
        <position position="462"/>
    </location>
</feature>
<feature type="sequence variant" id="VAR_041051" description="In dbSNP:rs55645753." evidence="7">
    <original>V</original>
    <variation>M</variation>
    <location>
        <position position="463"/>
    </location>
</feature>
<feature type="sequence variant" id="VAR_085698" description="In BPS; uncertain significance." evidence="12">
    <original>A</original>
    <variation>P</variation>
    <location>
        <position position="496"/>
    </location>
</feature>
<feature type="sequence variant" id="VAR_041052" description="In dbSNP:rs55829311." evidence="7">
    <original>N</original>
    <variation>Y</variation>
    <location>
        <position position="562"/>
    </location>
</feature>
<feature type="sequence variant" id="VAR_085699" description="In BPS; uncertain significance; dbSNP:rs763794698." evidence="12">
    <original>R</original>
    <variation>H</variation>
    <location>
        <position position="666"/>
    </location>
</feature>
<feature type="sequence variant" id="VAR_041053" description="In dbSNP:rs56056485." evidence="7">
    <original>R</original>
    <variation>H</variation>
    <location>
        <position position="669"/>
    </location>
</feature>
<feature type="sequence variant" id="VAR_041054" description="In dbSNP:rs35537517." evidence="7">
    <original>P</original>
    <variation>S</variation>
    <location>
        <position position="749"/>
    </location>
</feature>
<feature type="sequence conflict" description="In Ref. 1; BAB56136." evidence="15" ref="1">
    <original>M</original>
    <variation>V</variation>
    <location>
        <position position="714"/>
    </location>
</feature>
<proteinExistence type="evidence at protein level"/>
<evidence type="ECO:0000250" key="1"/>
<evidence type="ECO:0000250" key="2">
    <source>
        <dbReference type="UniProtKB" id="Q9ERK0"/>
    </source>
</evidence>
<evidence type="ECO:0000255" key="3">
    <source>
        <dbReference type="PROSITE-ProRule" id="PRU00159"/>
    </source>
</evidence>
<evidence type="ECO:0000255" key="4">
    <source>
        <dbReference type="PROSITE-ProRule" id="PRU10027"/>
    </source>
</evidence>
<evidence type="ECO:0000256" key="5">
    <source>
        <dbReference type="SAM" id="MobiDB-lite"/>
    </source>
</evidence>
<evidence type="ECO:0000269" key="6">
    <source>
    </source>
</evidence>
<evidence type="ECO:0000269" key="7">
    <source>
    </source>
</evidence>
<evidence type="ECO:0000269" key="8">
    <source>
    </source>
</evidence>
<evidence type="ECO:0000269" key="9">
    <source>
    </source>
</evidence>
<evidence type="ECO:0000269" key="10">
    <source>
    </source>
</evidence>
<evidence type="ECO:0000269" key="11">
    <source>
    </source>
</evidence>
<evidence type="ECO:0000269" key="12">
    <source>
    </source>
</evidence>
<evidence type="ECO:0000269" key="13">
    <source>
    </source>
</evidence>
<evidence type="ECO:0000303" key="14">
    <source ref="1"/>
</evidence>
<evidence type="ECO:0000305" key="15"/>
<protein>
    <recommendedName>
        <fullName>Receptor-interacting serine/threonine-protein kinase 4</fullName>
        <ecNumber evidence="2">2.7.11.1</ecNumber>
    </recommendedName>
    <alternativeName>
        <fullName>Ankyrin repeat domain-containing protein 3</fullName>
    </alternativeName>
    <alternativeName>
        <fullName>PKC-delta-interacting protein kinase</fullName>
    </alternativeName>
</protein>
<accession>P57078</accession>
<accession>Q96KH0</accession>
<dbReference type="EC" id="2.7.11.1" evidence="2"/>
<dbReference type="EMBL" id="AB047783">
    <property type="protein sequence ID" value="BAB56136.1"/>
    <property type="molecule type" value="mRNA"/>
</dbReference>
<dbReference type="EMBL" id="AP001743">
    <property type="protein sequence ID" value="BAA95526.1"/>
    <property type="molecule type" value="Genomic_DNA"/>
</dbReference>
<dbReference type="CCDS" id="CCDS13675.1">
    <molecule id="P57078-2"/>
</dbReference>
<dbReference type="SMR" id="P57078"/>
<dbReference type="DIP" id="DIP-40722N"/>
<dbReference type="FunCoup" id="P57078">
    <property type="interactions" value="865"/>
</dbReference>
<dbReference type="IntAct" id="P57078">
    <property type="interactions" value="405"/>
</dbReference>
<dbReference type="STRING" id="9606.ENSP00000332454"/>
<dbReference type="BindingDB" id="P57078"/>
<dbReference type="ChEMBL" id="CHEMBL6083"/>
<dbReference type="DrugBank" id="DB12010">
    <property type="generic name" value="Fostamatinib"/>
</dbReference>
<dbReference type="DrugCentral" id="P57078"/>
<dbReference type="iPTMnet" id="P57078"/>
<dbReference type="PhosphoSitePlus" id="P57078"/>
<dbReference type="BioMuta" id="RIPK4"/>
<dbReference type="DMDM" id="10719883"/>
<dbReference type="CPTAC" id="CPTAC-2927"/>
<dbReference type="CPTAC" id="CPTAC-2928"/>
<dbReference type="jPOST" id="P57078"/>
<dbReference type="MassIVE" id="P57078"/>
<dbReference type="PaxDb" id="9606-ENSP00000332454"/>
<dbReference type="PeptideAtlas" id="P57078"/>
<dbReference type="ProteomicsDB" id="56989">
    <molecule id="P57078-1"/>
</dbReference>
<dbReference type="ProteomicsDB" id="56990">
    <molecule id="P57078-2"/>
</dbReference>
<dbReference type="Pumba" id="P57078"/>
<dbReference type="Antibodypedia" id="9243">
    <property type="antibodies" value="308 antibodies from 27 providers"/>
</dbReference>
<dbReference type="Ensembl" id="ENST00000332512.8">
    <molecule id="P57078-2"/>
    <property type="protein sequence ID" value="ENSP00000332454.3"/>
    <property type="gene ID" value="ENSG00000183421.12"/>
</dbReference>
<dbReference type="Ensembl" id="ENST00000352483.3">
    <molecule id="P57078-1"/>
    <property type="protein sequence ID" value="ENSP00000330161.2"/>
    <property type="gene ID" value="ENSG00000183421.12"/>
</dbReference>
<dbReference type="MANE-Select" id="ENST00000332512.8">
    <molecule id="P57078-2"/>
    <property type="protein sequence ID" value="ENSP00000332454.3"/>
    <property type="RefSeq nucleotide sequence ID" value="NM_020639.3"/>
    <property type="RefSeq protein sequence ID" value="NP_065690.2"/>
</dbReference>
<dbReference type="UCSC" id="uc002yzn.2">
    <molecule id="P57078-1"/>
    <property type="organism name" value="human"/>
</dbReference>
<dbReference type="AGR" id="HGNC:496"/>
<dbReference type="GeneCards" id="RIPK4"/>
<dbReference type="HGNC" id="HGNC:496">
    <property type="gene designation" value="RIPK4"/>
</dbReference>
<dbReference type="HPA" id="ENSG00000183421">
    <property type="expression patterns" value="Tissue enhanced (esophagus)"/>
</dbReference>
<dbReference type="MalaCards" id="RIPK4"/>
<dbReference type="MIM" id="214350">
    <property type="type" value="phenotype"/>
</dbReference>
<dbReference type="MIM" id="263650">
    <property type="type" value="phenotype"/>
</dbReference>
<dbReference type="MIM" id="605706">
    <property type="type" value="gene"/>
</dbReference>
<dbReference type="neXtProt" id="NX_P57078"/>
<dbReference type="OpenTargets" id="ENSG00000183421"/>
<dbReference type="Orphanet" id="1234">
    <property type="disease" value="Bartsocas-Papas syndrome"/>
</dbReference>
<dbReference type="Orphanet" id="1401">
    <property type="disease" value="CHAND syndrome"/>
</dbReference>
<dbReference type="VEuPathDB" id="HostDB:ENSG00000183421"/>
<dbReference type="eggNOG" id="KOG0192">
    <property type="taxonomic scope" value="Eukaryota"/>
</dbReference>
<dbReference type="eggNOG" id="KOG0504">
    <property type="taxonomic scope" value="Eukaryota"/>
</dbReference>
<dbReference type="GeneTree" id="ENSGT00940000159908"/>
<dbReference type="HOGENOM" id="CLU_015188_0_0_1"/>
<dbReference type="InParanoid" id="P57078"/>
<dbReference type="OMA" id="HSKENTC"/>
<dbReference type="OrthoDB" id="195446at2759"/>
<dbReference type="PAN-GO" id="P57078">
    <property type="GO annotations" value="2 GO annotations based on evolutionary models"/>
</dbReference>
<dbReference type="PhylomeDB" id="P57078"/>
<dbReference type="TreeFam" id="TF106506"/>
<dbReference type="PathwayCommons" id="P57078"/>
<dbReference type="SignaLink" id="P57078"/>
<dbReference type="SIGNOR" id="P57078"/>
<dbReference type="ChiTaRS" id="RIPK4">
    <property type="organism name" value="human"/>
</dbReference>
<dbReference type="Pharos" id="P57078">
    <property type="development level" value="Tchem"/>
</dbReference>
<dbReference type="PRO" id="PR:P57078"/>
<dbReference type="Proteomes" id="UP000005640">
    <property type="component" value="Chromosome 21"/>
</dbReference>
<dbReference type="RNAct" id="P57078">
    <property type="molecule type" value="protein"/>
</dbReference>
<dbReference type="Bgee" id="ENSG00000183421">
    <property type="expression patterns" value="Expressed in esophagus squamous epithelium and 130 other cell types or tissues"/>
</dbReference>
<dbReference type="GO" id="GO:0005737">
    <property type="term" value="C:cytoplasm"/>
    <property type="evidence" value="ECO:0000250"/>
    <property type="project" value="UniProtKB"/>
</dbReference>
<dbReference type="GO" id="GO:0005829">
    <property type="term" value="C:cytosol"/>
    <property type="evidence" value="ECO:0000314"/>
    <property type="project" value="HPA"/>
</dbReference>
<dbReference type="GO" id="GO:0043231">
    <property type="term" value="C:intracellular membrane-bounded organelle"/>
    <property type="evidence" value="ECO:0000314"/>
    <property type="project" value="HPA"/>
</dbReference>
<dbReference type="GO" id="GO:0005886">
    <property type="term" value="C:plasma membrane"/>
    <property type="evidence" value="ECO:0000314"/>
    <property type="project" value="HPA"/>
</dbReference>
<dbReference type="GO" id="GO:0005524">
    <property type="term" value="F:ATP binding"/>
    <property type="evidence" value="ECO:0007669"/>
    <property type="project" value="UniProtKB-KW"/>
</dbReference>
<dbReference type="GO" id="GO:0106310">
    <property type="term" value="F:protein serine kinase activity"/>
    <property type="evidence" value="ECO:0000250"/>
    <property type="project" value="UniProtKB"/>
</dbReference>
<dbReference type="GO" id="GO:0004674">
    <property type="term" value="F:protein serine/threonine kinase activity"/>
    <property type="evidence" value="ECO:0007669"/>
    <property type="project" value="UniProtKB-KW"/>
</dbReference>
<dbReference type="GO" id="GO:0002009">
    <property type="term" value="P:morphogenesis of an epithelium"/>
    <property type="evidence" value="ECO:0000315"/>
    <property type="project" value="UniProtKB"/>
</dbReference>
<dbReference type="GO" id="GO:0051092">
    <property type="term" value="P:positive regulation of NF-kappaB transcription factor activity"/>
    <property type="evidence" value="ECO:0000315"/>
    <property type="project" value="UniProtKB"/>
</dbReference>
<dbReference type="GO" id="GO:0043588">
    <property type="term" value="P:skin development"/>
    <property type="evidence" value="ECO:0000250"/>
    <property type="project" value="UniProtKB"/>
</dbReference>
<dbReference type="CDD" id="cd14025">
    <property type="entry name" value="STKc_RIP4_like"/>
    <property type="match status" value="1"/>
</dbReference>
<dbReference type="FunFam" id="1.25.40.20:FF:000440">
    <property type="entry name" value="Receptor interacting serine/threonine kinase 4"/>
    <property type="match status" value="1"/>
</dbReference>
<dbReference type="FunFam" id="1.10.510.10:FF:000288">
    <property type="entry name" value="Receptor-interacting serine/threonine-protein kinase 2"/>
    <property type="match status" value="1"/>
</dbReference>
<dbReference type="FunFam" id="1.25.40.20:FF:000260">
    <property type="entry name" value="Receptor-interacting serine/threonine-protein kinase 4"/>
    <property type="match status" value="1"/>
</dbReference>
<dbReference type="Gene3D" id="1.25.40.20">
    <property type="entry name" value="Ankyrin repeat-containing domain"/>
    <property type="match status" value="3"/>
</dbReference>
<dbReference type="Gene3D" id="1.10.510.10">
    <property type="entry name" value="Transferase(Phosphotransferase) domain 1"/>
    <property type="match status" value="1"/>
</dbReference>
<dbReference type="InterPro" id="IPR002110">
    <property type="entry name" value="Ankyrin_rpt"/>
</dbReference>
<dbReference type="InterPro" id="IPR036770">
    <property type="entry name" value="Ankyrin_rpt-contain_sf"/>
</dbReference>
<dbReference type="InterPro" id="IPR011009">
    <property type="entry name" value="Kinase-like_dom_sf"/>
</dbReference>
<dbReference type="InterPro" id="IPR000719">
    <property type="entry name" value="Prot_kinase_dom"/>
</dbReference>
<dbReference type="InterPro" id="IPR017441">
    <property type="entry name" value="Protein_kinase_ATP_BS"/>
</dbReference>
<dbReference type="InterPro" id="IPR008271">
    <property type="entry name" value="Ser/Thr_kinase_AS"/>
</dbReference>
<dbReference type="PANTHER" id="PTHR24198">
    <property type="entry name" value="ANKYRIN REPEAT AND PROTEIN KINASE DOMAIN-CONTAINING PROTEIN"/>
    <property type="match status" value="1"/>
</dbReference>
<dbReference type="PANTHER" id="PTHR24198:SF65">
    <property type="entry name" value="RECEPTOR-INTERACTING SERINE_THREONINE-PROTEIN KINASE 4"/>
    <property type="match status" value="1"/>
</dbReference>
<dbReference type="Pfam" id="PF12796">
    <property type="entry name" value="Ank_2"/>
    <property type="match status" value="3"/>
</dbReference>
<dbReference type="Pfam" id="PF13637">
    <property type="entry name" value="Ank_4"/>
    <property type="match status" value="2"/>
</dbReference>
<dbReference type="Pfam" id="PF00069">
    <property type="entry name" value="Pkinase"/>
    <property type="match status" value="1"/>
</dbReference>
<dbReference type="PRINTS" id="PR01415">
    <property type="entry name" value="ANKYRIN"/>
</dbReference>
<dbReference type="SMART" id="SM00248">
    <property type="entry name" value="ANK"/>
    <property type="match status" value="10"/>
</dbReference>
<dbReference type="SMART" id="SM00220">
    <property type="entry name" value="S_TKc"/>
    <property type="match status" value="1"/>
</dbReference>
<dbReference type="SUPFAM" id="SSF48403">
    <property type="entry name" value="Ankyrin repeat"/>
    <property type="match status" value="1"/>
</dbReference>
<dbReference type="SUPFAM" id="SSF56112">
    <property type="entry name" value="Protein kinase-like (PK-like)"/>
    <property type="match status" value="1"/>
</dbReference>
<dbReference type="PROSITE" id="PS50297">
    <property type="entry name" value="ANK_REP_REGION"/>
    <property type="match status" value="1"/>
</dbReference>
<dbReference type="PROSITE" id="PS50088">
    <property type="entry name" value="ANK_REPEAT"/>
    <property type="match status" value="9"/>
</dbReference>
<dbReference type="PROSITE" id="PS00107">
    <property type="entry name" value="PROTEIN_KINASE_ATP"/>
    <property type="match status" value="1"/>
</dbReference>
<dbReference type="PROSITE" id="PS50011">
    <property type="entry name" value="PROTEIN_KINASE_DOM"/>
    <property type="match status" value="1"/>
</dbReference>
<dbReference type="PROSITE" id="PS00108">
    <property type="entry name" value="PROTEIN_KINASE_ST"/>
    <property type="match status" value="1"/>
</dbReference>
<gene>
    <name type="primary">RIPK4</name>
    <name type="synonym">ANKRD3</name>
    <name type="synonym">DIK</name>
</gene>
<keyword id="KW-0025">Alternative splicing</keyword>
<keyword id="KW-0040">ANK repeat</keyword>
<keyword id="KW-0067">ATP-binding</keyword>
<keyword id="KW-0963">Cytoplasm</keyword>
<keyword id="KW-0225">Disease variant</keyword>
<keyword id="KW-0038">Ectodermal dysplasia</keyword>
<keyword id="KW-1017">Isopeptide bond</keyword>
<keyword id="KW-0418">Kinase</keyword>
<keyword id="KW-0472">Membrane</keyword>
<keyword id="KW-0547">Nucleotide-binding</keyword>
<keyword id="KW-0597">Phosphoprotein</keyword>
<keyword id="KW-1267">Proteomics identification</keyword>
<keyword id="KW-0675">Receptor</keyword>
<keyword id="KW-1185">Reference proteome</keyword>
<keyword id="KW-0677">Repeat</keyword>
<keyword id="KW-0723">Serine/threonine-protein kinase</keyword>
<keyword id="KW-0808">Transferase</keyword>
<keyword id="KW-0832">Ubl conjugation</keyword>
<comment type="function">
    <text evidence="2 6 9">Serine/threonine protein kinase (By similarity). Required for embryonic skin development and correct skin homeostasis in adults, via phosphorylation of PKP1 and subsequent promotion of keratinocyte differentiation and cell adhesion (By similarity). It is a direct transcriptional target of TP63 (PubMed:22197488). Plays a role in NF-kappa-B activation (PubMed:12446564).</text>
</comment>
<comment type="catalytic activity">
    <reaction evidence="2">
        <text>L-seryl-[protein] + ATP = O-phospho-L-seryl-[protein] + ADP + H(+)</text>
        <dbReference type="Rhea" id="RHEA:17989"/>
        <dbReference type="Rhea" id="RHEA-COMP:9863"/>
        <dbReference type="Rhea" id="RHEA-COMP:11604"/>
        <dbReference type="ChEBI" id="CHEBI:15378"/>
        <dbReference type="ChEBI" id="CHEBI:29999"/>
        <dbReference type="ChEBI" id="CHEBI:30616"/>
        <dbReference type="ChEBI" id="CHEBI:83421"/>
        <dbReference type="ChEBI" id="CHEBI:456216"/>
        <dbReference type="EC" id="2.7.11.1"/>
    </reaction>
</comment>
<comment type="catalytic activity">
    <reaction>
        <text>L-threonyl-[protein] + ATP = O-phospho-L-threonyl-[protein] + ADP + H(+)</text>
        <dbReference type="Rhea" id="RHEA:46608"/>
        <dbReference type="Rhea" id="RHEA-COMP:11060"/>
        <dbReference type="Rhea" id="RHEA-COMP:11605"/>
        <dbReference type="ChEBI" id="CHEBI:15378"/>
        <dbReference type="ChEBI" id="CHEBI:30013"/>
        <dbReference type="ChEBI" id="CHEBI:30616"/>
        <dbReference type="ChEBI" id="CHEBI:61977"/>
        <dbReference type="ChEBI" id="CHEBI:456216"/>
        <dbReference type="EC" id="2.7.11.1"/>
    </reaction>
</comment>
<comment type="subunit">
    <text evidence="1 6 8">Interacts with PRKCB (By similarity). Interacts with TRAF1, TRAF2, TRAF3 and TRAF5. Interacts with BIRC2/c-IAP1, BIRC3/c-IAP2 and XIAP/BIRC4.</text>
</comment>
<comment type="interaction">
    <interactant intactId="EBI-4422308">
        <id>P57078</id>
    </interactant>
    <interactant intactId="EBI-514538">
        <id>Q13490</id>
        <label>BIRC2</label>
    </interactant>
    <organismsDiffer>false</organismsDiffer>
    <experiments>3</experiments>
</comment>
<comment type="interaction">
    <interactant intactId="EBI-4422308">
        <id>P57078</id>
    </interactant>
    <interactant intactId="EBI-517709">
        <id>Q13489</id>
        <label>BIRC3</label>
    </interactant>
    <organismsDiffer>false</organismsDiffer>
    <experiments>3</experiments>
</comment>
<comment type="interaction">
    <interactant intactId="EBI-4422308">
        <id>P57078</id>
    </interactant>
    <interactant intactId="EBI-740850">
        <id>O14641</id>
        <label>DVL2</label>
    </interactant>
    <organismsDiffer>false</organismsDiffer>
    <experiments>4</experiments>
</comment>
<comment type="interaction">
    <interactant intactId="EBI-4422308">
        <id>P57078</id>
    </interactant>
    <interactant intactId="EBI-745632">
        <id>Q9NWT6</id>
        <label>HIF1AN</label>
    </interactant>
    <organismsDiffer>false</organismsDiffer>
    <experiments>4</experiments>
</comment>
<comment type="interaction">
    <interactant intactId="EBI-4422308">
        <id>P57078</id>
    </interactant>
    <interactant intactId="EBI-517127">
        <id>P98170</id>
        <label>XIAP</label>
    </interactant>
    <organismsDiffer>false</organismsDiffer>
    <experiments>2</experiments>
</comment>
<comment type="interaction">
    <interactant intactId="EBI-12854608">
        <id>P57078-2</id>
    </interactant>
    <interactant intactId="EBI-347538">
        <id>Q9Y4H4</id>
        <label>GPSM3</label>
    </interactant>
    <organismsDiffer>false</organismsDiffer>
    <experiments>3</experiments>
</comment>
<comment type="interaction">
    <interactant intactId="EBI-12854608">
        <id>P57078-2</id>
    </interactant>
    <interactant intactId="EBI-11959123">
        <id>Q99932-2</id>
        <label>SPAG8</label>
    </interactant>
    <organismsDiffer>false</organismsDiffer>
    <experiments>3</experiments>
</comment>
<comment type="interaction">
    <interactant intactId="EBI-12854608">
        <id>P57078-2</id>
    </interactant>
    <interactant intactId="EBI-11747707">
        <id>B2RUY7</id>
        <label>VWC2L</label>
    </interactant>
    <organismsDiffer>false</organismsDiffer>
    <experiments>3</experiments>
</comment>
<comment type="subcellular location">
    <subcellularLocation>
        <location>Cytoplasm</location>
    </subcellularLocation>
    <subcellularLocation>
        <location evidence="1">Membrane</location>
        <topology evidence="1">Peripheral membrane protein</topology>
    </subcellularLocation>
</comment>
<comment type="alternative products">
    <event type="alternative splicing"/>
    <isoform>
        <id>P57078-1</id>
        <name>1</name>
        <sequence type="displayed"/>
    </isoform>
    <isoform>
        <id>P57078-2</id>
        <name>2</name>
        <sequence type="described" ref="VSP_004862"/>
    </isoform>
</comment>
<comment type="tissue specificity">
    <text evidence="13">Expressed in hair follicles and skin.</text>
</comment>
<comment type="PTM">
    <text evidence="1">May be phosphorylated by MAP3K2 and MAP3K3.</text>
</comment>
<comment type="PTM">
    <text evidence="6">Proteolytically cleaved by during Fas-induced apoptosis. Cleavage at Asp-388 and Asp-426.</text>
</comment>
<comment type="PTM">
    <text evidence="8">Polyubiquitinated with 'Lys-48' and 'Lys-63'-linked chains by BIRC2/c-IAP1 and BIRC3/c-IAP2, leading to activation of NF-kappa-B.</text>
</comment>
<comment type="disease" evidence="9 10 12">
    <disease id="DI-03375">
        <name>Bartsocas-Papas syndrome</name>
        <acronym>BPS</acronym>
        <description>An autosomal recessive disorder characterized by multiple popliteal pterygia leading to severe arthrogryposis, ankyloblepharon filiforme adnatum, filiform bands between the jaws, synostosis of the carpal/tarsal and phalangeal bones in the hands and feet, digital hypoplasia/aplasia, complete soft-tissue syndactyly, lack of nails, lack of scalp hair, eyebrows and eyelashes, blepharophimosis, cleft lip and/or palate, and hypoplastic external genitalia. Early lethality is common, although survival into childhood and beyond has been reported.</description>
        <dbReference type="MIM" id="263650"/>
    </disease>
    <text>The disease is caused by variants affecting the gene represented in this entry.</text>
</comment>
<comment type="disease" evidence="11 13">
    <disease id="DI-05366">
        <name>CHAND syndrome</name>
        <acronym>CHANDS</acronym>
        <description>An autosomal recessive syndrome characterized by ankyloblepharon, sparse, curly and woolly hair, nail dysplasia, and oral frenula.</description>
        <dbReference type="MIM" id="214350"/>
    </disease>
    <text>The disease may be caused by variants affecting the gene represented in this entry.</text>
</comment>
<comment type="similarity">
    <text evidence="15">Belongs to the protein kinase superfamily. TKL Ser/Thr protein kinase family.</text>
</comment>
<name>RIPK4_HUMAN</name>